<reference key="1">
    <citation type="journal article" date="2006" name="Proc. Natl. Acad. Sci. U.S.A.">
        <title>Genome reduction in Leptospira borgpetersenii reflects limited transmission potential.</title>
        <authorList>
            <person name="Bulach D.M."/>
            <person name="Zuerner R.L."/>
            <person name="Wilson P."/>
            <person name="Seemann T."/>
            <person name="McGrath A."/>
            <person name="Cullen P.A."/>
            <person name="Davis J."/>
            <person name="Johnson M."/>
            <person name="Kuczek E."/>
            <person name="Alt D.P."/>
            <person name="Peterson-Burch B."/>
            <person name="Coppel R.L."/>
            <person name="Rood J.I."/>
            <person name="Davies J.K."/>
            <person name="Adler B."/>
        </authorList>
    </citation>
    <scope>NUCLEOTIDE SEQUENCE [LARGE SCALE GENOMIC DNA]</scope>
    <source>
        <strain>L550</strain>
    </source>
</reference>
<keyword id="KW-1005">Bacterial flagellum biogenesis</keyword>
<keyword id="KW-0143">Chaperone</keyword>
<keyword id="KW-0963">Cytoplasm</keyword>
<keyword id="KW-0810">Translation regulation</keyword>
<proteinExistence type="inferred from homology"/>
<evidence type="ECO:0000255" key="1">
    <source>
        <dbReference type="HAMAP-Rule" id="MF_01185"/>
    </source>
</evidence>
<protein>
    <recommendedName>
        <fullName evidence="1">Flagellar assembly factor FliW</fullName>
    </recommendedName>
</protein>
<accession>Q056M3</accession>
<comment type="function">
    <text evidence="1">Acts as an anti-CsrA protein, binds CsrA and prevents it from repressing translation of its target genes, one of which is flagellin. Binds to flagellin and participates in the assembly of the flagellum.</text>
</comment>
<comment type="subunit">
    <text evidence="1">Interacts with translational regulator CsrA and flagellin(s).</text>
</comment>
<comment type="subcellular location">
    <subcellularLocation>
        <location evidence="1">Cytoplasm</location>
    </subcellularLocation>
</comment>
<comment type="similarity">
    <text evidence="1">Belongs to the FliW family.</text>
</comment>
<gene>
    <name evidence="1" type="primary">fliW</name>
    <name type="ordered locus">LBL_0099</name>
</gene>
<feature type="chain" id="PRO_1000065820" description="Flagellar assembly factor FliW">
    <location>
        <begin position="1"/>
        <end position="150"/>
    </location>
</feature>
<sequence>MEIEIQTKPFGKMQISEKQILSFPEGLLGFEDYKKFALIEEEEESVFKWLQSVEEVDLAFVVIPPSLFKKEYKPLIPEQELQGIGITDLEDGLMLVIVTVPGEDPALMTANMQGPILINKKTLLGKQFISRNESHSVREKILASAAVEMD</sequence>
<dbReference type="EMBL" id="CP000348">
    <property type="protein sequence ID" value="ABJ77722.1"/>
    <property type="molecule type" value="Genomic_DNA"/>
</dbReference>
<dbReference type="RefSeq" id="WP_011669196.1">
    <property type="nucleotide sequence ID" value="NC_008508.1"/>
</dbReference>
<dbReference type="SMR" id="Q056M3"/>
<dbReference type="KEGG" id="lbl:LBL_0099"/>
<dbReference type="HOGENOM" id="CLU_112356_0_2_12"/>
<dbReference type="GO" id="GO:0005737">
    <property type="term" value="C:cytoplasm"/>
    <property type="evidence" value="ECO:0007669"/>
    <property type="project" value="UniProtKB-SubCell"/>
</dbReference>
<dbReference type="GO" id="GO:0044780">
    <property type="term" value="P:bacterial-type flagellum assembly"/>
    <property type="evidence" value="ECO:0007669"/>
    <property type="project" value="UniProtKB-UniRule"/>
</dbReference>
<dbReference type="GO" id="GO:0006417">
    <property type="term" value="P:regulation of translation"/>
    <property type="evidence" value="ECO:0007669"/>
    <property type="project" value="UniProtKB-KW"/>
</dbReference>
<dbReference type="Gene3D" id="2.30.290.10">
    <property type="entry name" value="BH3618-like"/>
    <property type="match status" value="1"/>
</dbReference>
<dbReference type="HAMAP" id="MF_01185">
    <property type="entry name" value="FliW"/>
    <property type="match status" value="1"/>
</dbReference>
<dbReference type="InterPro" id="IPR003775">
    <property type="entry name" value="Flagellar_assembly_factor_FliW"/>
</dbReference>
<dbReference type="InterPro" id="IPR024046">
    <property type="entry name" value="Flagellar_assmbl_FliW_dom_sf"/>
</dbReference>
<dbReference type="NCBIfam" id="NF009793">
    <property type="entry name" value="PRK13285.1-1"/>
    <property type="match status" value="1"/>
</dbReference>
<dbReference type="PANTHER" id="PTHR39190">
    <property type="entry name" value="FLAGELLAR ASSEMBLY FACTOR FLIW"/>
    <property type="match status" value="1"/>
</dbReference>
<dbReference type="PANTHER" id="PTHR39190:SF1">
    <property type="entry name" value="FLAGELLAR ASSEMBLY FACTOR FLIW"/>
    <property type="match status" value="1"/>
</dbReference>
<dbReference type="Pfam" id="PF02623">
    <property type="entry name" value="FliW"/>
    <property type="match status" value="1"/>
</dbReference>
<dbReference type="SUPFAM" id="SSF141457">
    <property type="entry name" value="BH3618-like"/>
    <property type="match status" value="1"/>
</dbReference>
<organism>
    <name type="scientific">Leptospira borgpetersenii serovar Hardjo-bovis (strain L550)</name>
    <dbReference type="NCBI Taxonomy" id="355276"/>
    <lineage>
        <taxon>Bacteria</taxon>
        <taxon>Pseudomonadati</taxon>
        <taxon>Spirochaetota</taxon>
        <taxon>Spirochaetia</taxon>
        <taxon>Leptospirales</taxon>
        <taxon>Leptospiraceae</taxon>
        <taxon>Leptospira</taxon>
    </lineage>
</organism>
<name>FLIW_LEPBL</name>